<dbReference type="EMBL" id="BC058061">
    <property type="protein sequence ID" value="AAH58061.1"/>
    <property type="molecule type" value="mRNA"/>
</dbReference>
<dbReference type="RefSeq" id="NP_998680.1">
    <property type="nucleotide sequence ID" value="NM_213515.1"/>
</dbReference>
<dbReference type="SMR" id="Q6PEH5"/>
<dbReference type="BioGRID" id="91380">
    <property type="interactions" value="3"/>
</dbReference>
<dbReference type="FunCoup" id="Q6PEH5">
    <property type="interactions" value="3414"/>
</dbReference>
<dbReference type="STRING" id="7955.ENSDARP00000004795"/>
<dbReference type="PaxDb" id="7955-ENSDARP00000004795"/>
<dbReference type="Ensembl" id="ENSDART00000026578">
    <property type="protein sequence ID" value="ENSDARP00000004795"/>
    <property type="gene ID" value="ENSDARG00000028198"/>
</dbReference>
<dbReference type="GeneID" id="406836"/>
<dbReference type="KEGG" id="dre:406836"/>
<dbReference type="AGR" id="ZFIN:ZDB-GENE-040426-2919"/>
<dbReference type="CTD" id="7336"/>
<dbReference type="ZFIN" id="ZDB-GENE-040426-2919">
    <property type="gene designation" value="ube2v2"/>
</dbReference>
<dbReference type="eggNOG" id="KOG0896">
    <property type="taxonomic scope" value="Eukaryota"/>
</dbReference>
<dbReference type="HOGENOM" id="CLU_063065_3_0_1"/>
<dbReference type="InParanoid" id="Q6PEH5"/>
<dbReference type="OMA" id="NWSREST"/>
<dbReference type="OrthoDB" id="6508832at2759"/>
<dbReference type="PhylomeDB" id="Q6PEH5"/>
<dbReference type="TreeFam" id="TF316971"/>
<dbReference type="Reactome" id="R-DRE-983168">
    <property type="pathway name" value="Antigen processing: Ubiquitination &amp; Proteasome degradation"/>
</dbReference>
<dbReference type="PRO" id="PR:Q6PEH5"/>
<dbReference type="Proteomes" id="UP000000437">
    <property type="component" value="Chromosome 24"/>
</dbReference>
<dbReference type="Bgee" id="ENSDARG00000028198">
    <property type="expression patterns" value="Expressed in somite and 29 other cell types or tissues"/>
</dbReference>
<dbReference type="GO" id="GO:0005634">
    <property type="term" value="C:nucleus"/>
    <property type="evidence" value="ECO:0000318"/>
    <property type="project" value="GO_Central"/>
</dbReference>
<dbReference type="GO" id="GO:0031371">
    <property type="term" value="C:ubiquitin conjugating enzyme complex"/>
    <property type="evidence" value="ECO:0000318"/>
    <property type="project" value="GO_Central"/>
</dbReference>
<dbReference type="GO" id="GO:0006301">
    <property type="term" value="P:postreplication repair"/>
    <property type="evidence" value="ECO:0000318"/>
    <property type="project" value="GO_Central"/>
</dbReference>
<dbReference type="GO" id="GO:0070534">
    <property type="term" value="P:protein K63-linked ubiquitination"/>
    <property type="evidence" value="ECO:0000314"/>
    <property type="project" value="ZFIN"/>
</dbReference>
<dbReference type="CDD" id="cd23807">
    <property type="entry name" value="UEV_UBE2V"/>
    <property type="match status" value="1"/>
</dbReference>
<dbReference type="FunFam" id="3.10.110.10:FF:000012">
    <property type="entry name" value="Ubiquitin-conjugating enzyme E2 variant 2"/>
    <property type="match status" value="1"/>
</dbReference>
<dbReference type="Gene3D" id="3.10.110.10">
    <property type="entry name" value="Ubiquitin Conjugating Enzyme"/>
    <property type="match status" value="1"/>
</dbReference>
<dbReference type="InterPro" id="IPR000608">
    <property type="entry name" value="UBQ-conjugat_E2_core"/>
</dbReference>
<dbReference type="InterPro" id="IPR016135">
    <property type="entry name" value="UBQ-conjugating_enzyme/RWD"/>
</dbReference>
<dbReference type="PANTHER" id="PTHR24068">
    <property type="entry name" value="UBIQUITIN-CONJUGATING ENZYME E2"/>
    <property type="match status" value="1"/>
</dbReference>
<dbReference type="Pfam" id="PF00179">
    <property type="entry name" value="UQ_con"/>
    <property type="match status" value="1"/>
</dbReference>
<dbReference type="SMART" id="SM00212">
    <property type="entry name" value="UBCc"/>
    <property type="match status" value="1"/>
</dbReference>
<dbReference type="SUPFAM" id="SSF54495">
    <property type="entry name" value="UBC-like"/>
    <property type="match status" value="1"/>
</dbReference>
<dbReference type="PROSITE" id="PS50127">
    <property type="entry name" value="UBC_2"/>
    <property type="match status" value="1"/>
</dbReference>
<gene>
    <name type="primary">ube2v2</name>
    <name type="ORF">zgc:63717</name>
</gene>
<comment type="function">
    <text evidence="1">Has no ubiquitin ligase activity on its own. The ube2v2/ube2n heterodimer catalyzes the synthesis of non-canonical poly-ubiquitin chains that are linked through 'Lys-63'. This type of poly-ubiquitination does not lead to protein degradation by the proteasome. Mediates transcriptional activation of target genes. Plays a role in the control of progress through the cell cycle and differentiation. Plays a role in the error-free DNA repair pathway and contributes to the survival of cells after DNA damage (By similarity).</text>
</comment>
<comment type="subunit">
    <text evidence="1">Heterodimer with ube2n.</text>
</comment>
<comment type="similarity">
    <text evidence="2">Belongs to the ubiquitin-conjugating enzyme family.</text>
</comment>
<evidence type="ECO:0000250" key="1"/>
<evidence type="ECO:0000255" key="2">
    <source>
        <dbReference type="PROSITE-ProRule" id="PRU00388"/>
    </source>
</evidence>
<name>UB2V2_DANRE</name>
<accession>Q6PEH5</accession>
<organism>
    <name type="scientific">Danio rerio</name>
    <name type="common">Zebrafish</name>
    <name type="synonym">Brachydanio rerio</name>
    <dbReference type="NCBI Taxonomy" id="7955"/>
    <lineage>
        <taxon>Eukaryota</taxon>
        <taxon>Metazoa</taxon>
        <taxon>Chordata</taxon>
        <taxon>Craniata</taxon>
        <taxon>Vertebrata</taxon>
        <taxon>Euteleostomi</taxon>
        <taxon>Actinopterygii</taxon>
        <taxon>Neopterygii</taxon>
        <taxon>Teleostei</taxon>
        <taxon>Ostariophysi</taxon>
        <taxon>Cypriniformes</taxon>
        <taxon>Danionidae</taxon>
        <taxon>Danioninae</taxon>
        <taxon>Danio</taxon>
    </lineage>
</organism>
<proteinExistence type="evidence at transcript level"/>
<protein>
    <recommendedName>
        <fullName>Ubiquitin-conjugating enzyme E2 variant 2</fullName>
    </recommendedName>
</protein>
<keyword id="KW-1185">Reference proteome</keyword>
<keyword id="KW-0833">Ubl conjugation pathway</keyword>
<reference key="1">
    <citation type="submission" date="2003-09" db="EMBL/GenBank/DDBJ databases">
        <authorList>
            <consortium name="NIH - Zebrafish Gene Collection (ZGC) project"/>
        </authorList>
    </citation>
    <scope>NUCLEOTIDE SEQUENCE [LARGE SCALE MRNA]</scope>
    <source>
        <strain>AB</strain>
    </source>
</reference>
<sequence>MAASSGVKVPRNFRLLEELEEGQKGVGDGTVSWGLEDDEDMTLTRWTGMIIGPARTNYENRIYSLKVECGPKYPEVPPTVRFVTKISMNGINNSNGMVDARSIPILAKWQNSYSIKVVLQELRRLMMSKENMKLPQPPEGQTYSN</sequence>
<feature type="chain" id="PRO_0000292587" description="Ubiquitin-conjugating enzyme E2 variant 2">
    <location>
        <begin position="1"/>
        <end position="145"/>
    </location>
</feature>
<feature type="domain" description="UBC core" evidence="2">
    <location>
        <begin position="10"/>
        <end position="145"/>
    </location>
</feature>